<protein>
    <recommendedName>
        <fullName evidence="2">Ribose-5-phosphate isomerase</fullName>
        <ecNumber evidence="4">5.3.1.6</ecNumber>
    </recommendedName>
    <alternativeName>
        <fullName>D-ribose-5-phosphate ketol-isomerase</fullName>
    </alternativeName>
    <alternativeName>
        <fullName>Phosphoriboisomerase</fullName>
    </alternativeName>
</protein>
<name>RPIA_YEAST</name>
<sequence>MAAGVPKIDALESLGNPLEDAKRAAAYRAVDENLKFDDHKIIGIGSGSTVVYVAERIGQYLHDPKFYEVASKFICIPTGFQSRNLILDNKLQLGSIEQYPRIDIAFDGADEVDENLQLIKGGGACLFQEKLVSTSAKTFIVVADSRKKSPKHLGKNWRQGVPIEIVPSSYVRVKNDLLEQLHAEKVDIRQGGSAKAGPVVTDNNNFIIDADFGEISDPRKLHREIKLLVGVVETGLFIDNASKAYFGNSDGSVEVTEK</sequence>
<proteinExistence type="evidence at protein level"/>
<reference key="1">
    <citation type="journal article" date="1997" name="Yeast">
        <title>DNA sequencing and analysis of 130 kb from yeast chromosome XV.</title>
        <authorList>
            <person name="Voss H."/>
            <person name="Benes V."/>
            <person name="Andrade M.A."/>
            <person name="Valencia A."/>
            <person name="Rechmann S."/>
            <person name="Teodoru C."/>
            <person name="Schwager C."/>
            <person name="Paces V."/>
            <person name="Sander C."/>
            <person name="Ansorge W."/>
        </authorList>
    </citation>
    <scope>NUCLEOTIDE SEQUENCE [GENOMIC DNA]</scope>
</reference>
<reference key="2">
    <citation type="journal article" date="1997" name="Nature">
        <title>The nucleotide sequence of Saccharomyces cerevisiae chromosome XV.</title>
        <authorList>
            <person name="Dujon B."/>
            <person name="Albermann K."/>
            <person name="Aldea M."/>
            <person name="Alexandraki D."/>
            <person name="Ansorge W."/>
            <person name="Arino J."/>
            <person name="Benes V."/>
            <person name="Bohn C."/>
            <person name="Bolotin-Fukuhara M."/>
            <person name="Bordonne R."/>
            <person name="Boyer J."/>
            <person name="Camasses A."/>
            <person name="Casamayor A."/>
            <person name="Casas C."/>
            <person name="Cheret G."/>
            <person name="Cziepluch C."/>
            <person name="Daignan-Fornier B."/>
            <person name="Dang V.-D."/>
            <person name="de Haan M."/>
            <person name="Delius H."/>
            <person name="Durand P."/>
            <person name="Fairhead C."/>
            <person name="Feldmann H."/>
            <person name="Gaillon L."/>
            <person name="Galisson F."/>
            <person name="Gamo F.-J."/>
            <person name="Gancedo C."/>
            <person name="Goffeau A."/>
            <person name="Goulding S.E."/>
            <person name="Grivell L.A."/>
            <person name="Habbig B."/>
            <person name="Hand N.J."/>
            <person name="Hani J."/>
            <person name="Hattenhorst U."/>
            <person name="Hebling U."/>
            <person name="Hernando Y."/>
            <person name="Herrero E."/>
            <person name="Heumann K."/>
            <person name="Hiesel R."/>
            <person name="Hilger F."/>
            <person name="Hofmann B."/>
            <person name="Hollenberg C.P."/>
            <person name="Hughes B."/>
            <person name="Jauniaux J.-C."/>
            <person name="Kalogeropoulos A."/>
            <person name="Katsoulou C."/>
            <person name="Kordes E."/>
            <person name="Lafuente M.J."/>
            <person name="Landt O."/>
            <person name="Louis E.J."/>
            <person name="Maarse A.C."/>
            <person name="Madania A."/>
            <person name="Mannhaupt G."/>
            <person name="Marck C."/>
            <person name="Martin R.P."/>
            <person name="Mewes H.-W."/>
            <person name="Michaux G."/>
            <person name="Paces V."/>
            <person name="Parle-McDermott A.G."/>
            <person name="Pearson B.M."/>
            <person name="Perrin A."/>
            <person name="Pettersson B."/>
            <person name="Poch O."/>
            <person name="Pohl T.M."/>
            <person name="Poirey R."/>
            <person name="Portetelle D."/>
            <person name="Pujol A."/>
            <person name="Purnelle B."/>
            <person name="Ramezani Rad M."/>
            <person name="Rechmann S."/>
            <person name="Schwager C."/>
            <person name="Schweizer M."/>
            <person name="Sor F."/>
            <person name="Sterky F."/>
            <person name="Tarassov I.A."/>
            <person name="Teodoru C."/>
            <person name="Tettelin H."/>
            <person name="Thierry A."/>
            <person name="Tobiasch E."/>
            <person name="Tzermia M."/>
            <person name="Uhlen M."/>
            <person name="Unseld M."/>
            <person name="Valens M."/>
            <person name="Vandenbol M."/>
            <person name="Vetter I."/>
            <person name="Vlcek C."/>
            <person name="Voet M."/>
            <person name="Volckaert G."/>
            <person name="Voss H."/>
            <person name="Wambutt R."/>
            <person name="Wedler H."/>
            <person name="Wiemann S."/>
            <person name="Winsor B."/>
            <person name="Wolfe K.H."/>
            <person name="Zollner A."/>
            <person name="Zumstein E."/>
            <person name="Kleine K."/>
        </authorList>
    </citation>
    <scope>NUCLEOTIDE SEQUENCE [LARGE SCALE GENOMIC DNA]</scope>
    <source>
        <strain>ATCC 204508 / S288c</strain>
    </source>
</reference>
<reference key="3">
    <citation type="journal article" date="2014" name="G3 (Bethesda)">
        <title>The reference genome sequence of Saccharomyces cerevisiae: Then and now.</title>
        <authorList>
            <person name="Engel S.R."/>
            <person name="Dietrich F.S."/>
            <person name="Fisk D.G."/>
            <person name="Binkley G."/>
            <person name="Balakrishnan R."/>
            <person name="Costanzo M.C."/>
            <person name="Dwight S.S."/>
            <person name="Hitz B.C."/>
            <person name="Karra K."/>
            <person name="Nash R.S."/>
            <person name="Weng S."/>
            <person name="Wong E.D."/>
            <person name="Lloyd P."/>
            <person name="Skrzypek M.S."/>
            <person name="Miyasato S.R."/>
            <person name="Simison M."/>
            <person name="Cherry J.M."/>
        </authorList>
    </citation>
    <scope>GENOME REANNOTATION</scope>
    <source>
        <strain>ATCC 204508 / S288c</strain>
    </source>
</reference>
<reference key="4">
    <citation type="journal article" date="1996" name="Curr. Genet.">
        <title>Cloning and characterization of the first two genes of the non-oxidative part of the Saccharomyces cerevisiae pentose-phosphate pathway.</title>
        <authorList>
            <person name="Miosga T."/>
            <person name="Zimmermann F.K."/>
        </authorList>
    </citation>
    <scope>CHARACTERIZATION</scope>
    <scope>CATALYTIC ACTIVITY</scope>
</reference>
<reference key="5">
    <citation type="journal article" date="2003" name="Nature">
        <title>Global analysis of protein expression in yeast.</title>
        <authorList>
            <person name="Ghaemmaghami S."/>
            <person name="Huh W.-K."/>
            <person name="Bower K."/>
            <person name="Howson R.W."/>
            <person name="Belle A."/>
            <person name="Dephoure N."/>
            <person name="O'Shea E.K."/>
            <person name="Weissman J.S."/>
        </authorList>
    </citation>
    <scope>LEVEL OF PROTEIN EXPRESSION [LARGE SCALE ANALYSIS]</scope>
</reference>
<reference key="6">
    <citation type="journal article" date="2012" name="Proc. Natl. Acad. Sci. U.S.A.">
        <title>N-terminal acetylome analyses and functional insights of the N-terminal acetyltransferase NatB.</title>
        <authorList>
            <person name="Van Damme P."/>
            <person name="Lasa M."/>
            <person name="Polevoda B."/>
            <person name="Gazquez C."/>
            <person name="Elosegui-Artola A."/>
            <person name="Kim D.S."/>
            <person name="De Juan-Pardo E."/>
            <person name="Demeyer K."/>
            <person name="Hole K."/>
            <person name="Larrea E."/>
            <person name="Timmerman E."/>
            <person name="Prieto J."/>
            <person name="Arnesen T."/>
            <person name="Sherman F."/>
            <person name="Gevaert K."/>
            <person name="Aldabe R."/>
        </authorList>
    </citation>
    <scope>IDENTIFICATION BY MASS SPECTROMETRY [LARGE SCALE ANALYSIS]</scope>
</reference>
<gene>
    <name type="primary">RKI1</name>
    <name type="ordered locus">YOR095C</name>
    <name type="ORF">YOR3174C</name>
</gene>
<comment type="catalytic activity">
    <reaction evidence="4">
        <text>aldehydo-D-ribose 5-phosphate = D-ribulose 5-phosphate</text>
        <dbReference type="Rhea" id="RHEA:14657"/>
        <dbReference type="ChEBI" id="CHEBI:58121"/>
        <dbReference type="ChEBI" id="CHEBI:58273"/>
        <dbReference type="EC" id="5.3.1.6"/>
    </reaction>
</comment>
<comment type="pathway">
    <text>Carbohydrate degradation; pentose phosphate pathway; D-ribose 5-phosphate from D-ribulose 5-phosphate (non-oxidative stage): step 1/1.</text>
</comment>
<comment type="miscellaneous">
    <text evidence="1">Present with 5680 molecules/cell in log phase SD medium.</text>
</comment>
<comment type="similarity">
    <text evidence="3">Belongs to the ribose 5-phosphate isomerase family.</text>
</comment>
<organism>
    <name type="scientific">Saccharomyces cerevisiae (strain ATCC 204508 / S288c)</name>
    <name type="common">Baker's yeast</name>
    <dbReference type="NCBI Taxonomy" id="559292"/>
    <lineage>
        <taxon>Eukaryota</taxon>
        <taxon>Fungi</taxon>
        <taxon>Dikarya</taxon>
        <taxon>Ascomycota</taxon>
        <taxon>Saccharomycotina</taxon>
        <taxon>Saccharomycetes</taxon>
        <taxon>Saccharomycetales</taxon>
        <taxon>Saccharomycetaceae</taxon>
        <taxon>Saccharomyces</taxon>
    </lineage>
</organism>
<evidence type="ECO:0000269" key="1">
    <source>
    </source>
</evidence>
<evidence type="ECO:0000303" key="2">
    <source>
    </source>
</evidence>
<evidence type="ECO:0000305" key="3"/>
<evidence type="ECO:0000305" key="4">
    <source>
    </source>
</evidence>
<evidence type="ECO:0007829" key="5">
    <source>
        <dbReference type="PDB" id="1XTZ"/>
    </source>
</evidence>
<keyword id="KW-0002">3D-structure</keyword>
<keyword id="KW-0413">Isomerase</keyword>
<keyword id="KW-1185">Reference proteome</keyword>
<feature type="chain" id="PRO_0000158524" description="Ribose-5-phosphate isomerase">
    <location>
        <begin position="1"/>
        <end position="258"/>
    </location>
</feature>
<feature type="helix" evidence="5">
    <location>
        <begin position="20"/>
        <end position="33"/>
    </location>
</feature>
<feature type="turn" evidence="5">
    <location>
        <begin position="36"/>
        <end position="38"/>
    </location>
</feature>
<feature type="strand" evidence="5">
    <location>
        <begin position="41"/>
        <end position="44"/>
    </location>
</feature>
<feature type="helix" evidence="5">
    <location>
        <begin position="51"/>
        <end position="61"/>
    </location>
</feature>
<feature type="turn" evidence="5">
    <location>
        <begin position="64"/>
        <end position="66"/>
    </location>
</feature>
<feature type="helix" evidence="5">
    <location>
        <begin position="67"/>
        <end position="70"/>
    </location>
</feature>
<feature type="strand" evidence="5">
    <location>
        <begin position="74"/>
        <end position="79"/>
    </location>
</feature>
<feature type="helix" evidence="5">
    <location>
        <begin position="80"/>
        <end position="88"/>
    </location>
</feature>
<feature type="turn" evidence="5">
    <location>
        <begin position="96"/>
        <end position="98"/>
    </location>
</feature>
<feature type="strand" evidence="5">
    <location>
        <begin position="101"/>
        <end position="107"/>
    </location>
</feature>
<feature type="strand" evidence="5">
    <location>
        <begin position="110"/>
        <end position="112"/>
    </location>
</feature>
<feature type="helix" evidence="5">
    <location>
        <begin position="126"/>
        <end position="133"/>
    </location>
</feature>
<feature type="strand" evidence="5">
    <location>
        <begin position="136"/>
        <end position="144"/>
    </location>
</feature>
<feature type="helix" evidence="5">
    <location>
        <begin position="145"/>
        <end position="147"/>
    </location>
</feature>
<feature type="strand" evidence="5">
    <location>
        <begin position="150"/>
        <end position="153"/>
    </location>
</feature>
<feature type="strand" evidence="5">
    <location>
        <begin position="161"/>
        <end position="165"/>
    </location>
</feature>
<feature type="helix" evidence="5">
    <location>
        <begin position="167"/>
        <end position="169"/>
    </location>
</feature>
<feature type="helix" evidence="5">
    <location>
        <begin position="170"/>
        <end position="179"/>
    </location>
</feature>
<feature type="strand" evidence="5">
    <location>
        <begin position="184"/>
        <end position="188"/>
    </location>
</feature>
<feature type="turn" evidence="5">
    <location>
        <begin position="192"/>
        <end position="194"/>
    </location>
</feature>
<feature type="strand" evidence="5">
    <location>
        <begin position="195"/>
        <end position="198"/>
    </location>
</feature>
<feature type="strand" evidence="5">
    <location>
        <begin position="206"/>
        <end position="211"/>
    </location>
</feature>
<feature type="strand" evidence="5">
    <location>
        <begin position="213"/>
        <end position="216"/>
    </location>
</feature>
<feature type="helix" evidence="5">
    <location>
        <begin position="218"/>
        <end position="226"/>
    </location>
</feature>
<feature type="strand" evidence="5">
    <location>
        <begin position="231"/>
        <end position="237"/>
    </location>
</feature>
<feature type="strand" evidence="5">
    <location>
        <begin position="242"/>
        <end position="247"/>
    </location>
</feature>
<feature type="strand" evidence="5">
    <location>
        <begin position="253"/>
        <end position="258"/>
    </location>
</feature>
<dbReference type="EC" id="5.3.1.6" evidence="4"/>
<dbReference type="EMBL" id="X94335">
    <property type="protein sequence ID" value="CAA64017.1"/>
    <property type="molecule type" value="Genomic_DNA"/>
</dbReference>
<dbReference type="EMBL" id="Z75003">
    <property type="protein sequence ID" value="CAA99292.1"/>
    <property type="molecule type" value="Genomic_DNA"/>
</dbReference>
<dbReference type="EMBL" id="BK006948">
    <property type="protein sequence ID" value="DAA10872.1"/>
    <property type="molecule type" value="Genomic_DNA"/>
</dbReference>
<dbReference type="PIR" id="S61656">
    <property type="entry name" value="S61656"/>
</dbReference>
<dbReference type="RefSeq" id="NP_014738.1">
    <property type="nucleotide sequence ID" value="NM_001183514.1"/>
</dbReference>
<dbReference type="PDB" id="1XTZ">
    <property type="method" value="X-ray"/>
    <property type="resolution" value="2.10 A"/>
    <property type="chains" value="A=1-258"/>
</dbReference>
<dbReference type="PDBsum" id="1XTZ"/>
<dbReference type="SMR" id="Q12189"/>
<dbReference type="BioGRID" id="34493">
    <property type="interactions" value="104"/>
</dbReference>
<dbReference type="DIP" id="DIP-4155N"/>
<dbReference type="FunCoup" id="Q12189">
    <property type="interactions" value="1157"/>
</dbReference>
<dbReference type="IntAct" id="Q12189">
    <property type="interactions" value="9"/>
</dbReference>
<dbReference type="MINT" id="Q12189"/>
<dbReference type="STRING" id="4932.YOR095C"/>
<dbReference type="iPTMnet" id="Q12189"/>
<dbReference type="PaxDb" id="4932-YOR095C"/>
<dbReference type="PeptideAtlas" id="Q12189"/>
<dbReference type="EnsemblFungi" id="YOR095C_mRNA">
    <property type="protein sequence ID" value="YOR095C"/>
    <property type="gene ID" value="YOR095C"/>
</dbReference>
<dbReference type="GeneID" id="854262"/>
<dbReference type="KEGG" id="sce:YOR095C"/>
<dbReference type="AGR" id="SGD:S000005621"/>
<dbReference type="SGD" id="S000005621">
    <property type="gene designation" value="RKI1"/>
</dbReference>
<dbReference type="VEuPathDB" id="FungiDB:YOR095C"/>
<dbReference type="eggNOG" id="KOG3075">
    <property type="taxonomic scope" value="Eukaryota"/>
</dbReference>
<dbReference type="GeneTree" id="ENSGT00390000004352"/>
<dbReference type="HOGENOM" id="CLU_056590_0_0_1"/>
<dbReference type="InParanoid" id="Q12189"/>
<dbReference type="OMA" id="ACHVQEK"/>
<dbReference type="OrthoDB" id="1555531at2759"/>
<dbReference type="BioCyc" id="YEAST:YOR095C-MONOMER"/>
<dbReference type="Reactome" id="R-SCE-71336">
    <property type="pathway name" value="Pentose phosphate pathway"/>
</dbReference>
<dbReference type="SABIO-RK" id="Q12189"/>
<dbReference type="UniPathway" id="UPA00115">
    <property type="reaction ID" value="UER00412"/>
</dbReference>
<dbReference type="BioGRID-ORCS" id="854262">
    <property type="hits" value="0 hits in 10 CRISPR screens"/>
</dbReference>
<dbReference type="EvolutionaryTrace" id="Q12189"/>
<dbReference type="PRO" id="PR:Q12189"/>
<dbReference type="Proteomes" id="UP000002311">
    <property type="component" value="Chromosome XV"/>
</dbReference>
<dbReference type="RNAct" id="Q12189">
    <property type="molecule type" value="protein"/>
</dbReference>
<dbReference type="GO" id="GO:0005737">
    <property type="term" value="C:cytoplasm"/>
    <property type="evidence" value="ECO:0007005"/>
    <property type="project" value="SGD"/>
</dbReference>
<dbReference type="GO" id="GO:0005634">
    <property type="term" value="C:nucleus"/>
    <property type="evidence" value="ECO:0007005"/>
    <property type="project" value="SGD"/>
</dbReference>
<dbReference type="GO" id="GO:0004751">
    <property type="term" value="F:ribose-5-phosphate isomerase activity"/>
    <property type="evidence" value="ECO:0000315"/>
    <property type="project" value="SGD"/>
</dbReference>
<dbReference type="GO" id="GO:0006014">
    <property type="term" value="P:D-ribose metabolic process"/>
    <property type="evidence" value="ECO:0000318"/>
    <property type="project" value="GO_Central"/>
</dbReference>
<dbReference type="GO" id="GO:0006098">
    <property type="term" value="P:pentose-phosphate shunt"/>
    <property type="evidence" value="ECO:0000315"/>
    <property type="project" value="SGD"/>
</dbReference>
<dbReference type="GO" id="GO:0009052">
    <property type="term" value="P:pentose-phosphate shunt, non-oxidative branch"/>
    <property type="evidence" value="ECO:0000318"/>
    <property type="project" value="GO_Central"/>
</dbReference>
<dbReference type="GO" id="GO:0008615">
    <property type="term" value="P:pyridoxine biosynthetic process"/>
    <property type="evidence" value="ECO:0000315"/>
    <property type="project" value="SGD"/>
</dbReference>
<dbReference type="CDD" id="cd01398">
    <property type="entry name" value="RPI_A"/>
    <property type="match status" value="1"/>
</dbReference>
<dbReference type="FunFam" id="3.40.50.1360:FF:000014">
    <property type="entry name" value="Ribose 5-phosphate isomerase"/>
    <property type="match status" value="1"/>
</dbReference>
<dbReference type="FunFam" id="3.30.70.260:FF:000053">
    <property type="entry name" value="Ribose-5-phosphate isomerase, putative"/>
    <property type="match status" value="1"/>
</dbReference>
<dbReference type="Gene3D" id="3.30.70.260">
    <property type="match status" value="1"/>
</dbReference>
<dbReference type="Gene3D" id="3.40.50.1360">
    <property type="match status" value="1"/>
</dbReference>
<dbReference type="InterPro" id="IPR037171">
    <property type="entry name" value="NagB/RpiA_transferase-like"/>
</dbReference>
<dbReference type="InterPro" id="IPR004788">
    <property type="entry name" value="Ribose5P_isomerase_type_A"/>
</dbReference>
<dbReference type="NCBIfam" id="TIGR00021">
    <property type="entry name" value="rpiA"/>
    <property type="match status" value="1"/>
</dbReference>
<dbReference type="PANTHER" id="PTHR11934">
    <property type="entry name" value="RIBOSE-5-PHOSPHATE ISOMERASE"/>
    <property type="match status" value="1"/>
</dbReference>
<dbReference type="PANTHER" id="PTHR11934:SF0">
    <property type="entry name" value="RIBOSE-5-PHOSPHATE ISOMERASE"/>
    <property type="match status" value="1"/>
</dbReference>
<dbReference type="Pfam" id="PF06026">
    <property type="entry name" value="Rib_5-P_isom_A"/>
    <property type="match status" value="1"/>
</dbReference>
<dbReference type="SUPFAM" id="SSF75445">
    <property type="entry name" value="D-ribose-5-phosphate isomerase (RpiA), lid domain"/>
    <property type="match status" value="1"/>
</dbReference>
<dbReference type="SUPFAM" id="SSF100950">
    <property type="entry name" value="NagB/RpiA/CoA transferase-like"/>
    <property type="match status" value="1"/>
</dbReference>
<accession>Q12189</accession>
<accession>D6W2F6</accession>